<evidence type="ECO:0000255" key="1">
    <source>
        <dbReference type="HAMAP-Rule" id="MF_01279"/>
    </source>
</evidence>
<protein>
    <recommendedName>
        <fullName evidence="1">Xaa-Pro dipeptidase</fullName>
        <shortName evidence="1">X-Pro dipeptidase</shortName>
        <ecNumber evidence="1">3.4.13.9</ecNumber>
    </recommendedName>
    <alternativeName>
        <fullName evidence="1">Imidodipeptidase</fullName>
    </alternativeName>
    <alternativeName>
        <fullName evidence="1">Proline dipeptidase</fullName>
        <shortName evidence="1">Prolidase</shortName>
    </alternativeName>
</protein>
<feature type="chain" id="PRO_1000140335" description="Xaa-Pro dipeptidase">
    <location>
        <begin position="1"/>
        <end position="443"/>
    </location>
</feature>
<feature type="binding site" evidence="1">
    <location>
        <position position="244"/>
    </location>
    <ligand>
        <name>Mn(2+)</name>
        <dbReference type="ChEBI" id="CHEBI:29035"/>
        <label>2</label>
    </ligand>
</feature>
<feature type="binding site" evidence="1">
    <location>
        <position position="255"/>
    </location>
    <ligand>
        <name>Mn(2+)</name>
        <dbReference type="ChEBI" id="CHEBI:29035"/>
        <label>1</label>
    </ligand>
</feature>
<feature type="binding site" evidence="1">
    <location>
        <position position="255"/>
    </location>
    <ligand>
        <name>Mn(2+)</name>
        <dbReference type="ChEBI" id="CHEBI:29035"/>
        <label>2</label>
    </ligand>
</feature>
<feature type="binding site" evidence="1">
    <location>
        <position position="336"/>
    </location>
    <ligand>
        <name>Mn(2+)</name>
        <dbReference type="ChEBI" id="CHEBI:29035"/>
        <label>1</label>
    </ligand>
</feature>
<feature type="binding site" evidence="1">
    <location>
        <position position="381"/>
    </location>
    <ligand>
        <name>Mn(2+)</name>
        <dbReference type="ChEBI" id="CHEBI:29035"/>
        <label>1</label>
    </ligand>
</feature>
<feature type="binding site" evidence="1">
    <location>
        <position position="420"/>
    </location>
    <ligand>
        <name>Mn(2+)</name>
        <dbReference type="ChEBI" id="CHEBI:29035"/>
        <label>1</label>
    </ligand>
</feature>
<feature type="binding site" evidence="1">
    <location>
        <position position="420"/>
    </location>
    <ligand>
        <name>Mn(2+)</name>
        <dbReference type="ChEBI" id="CHEBI:29035"/>
        <label>2</label>
    </ligand>
</feature>
<dbReference type="EC" id="3.4.13.9" evidence="1"/>
<dbReference type="EMBL" id="AM743169">
    <property type="protein sequence ID" value="CAQ47265.1"/>
    <property type="molecule type" value="Genomic_DNA"/>
</dbReference>
<dbReference type="RefSeq" id="WP_012481166.1">
    <property type="nucleotide sequence ID" value="NC_010943.1"/>
</dbReference>
<dbReference type="SMR" id="B2FT23"/>
<dbReference type="EnsemblBacteria" id="CAQ47265">
    <property type="protein sequence ID" value="CAQ47265"/>
    <property type="gene ID" value="Smlt3861"/>
</dbReference>
<dbReference type="KEGG" id="sml:Smlt3861"/>
<dbReference type="PATRIC" id="fig|522373.3.peg.3636"/>
<dbReference type="eggNOG" id="COG0006">
    <property type="taxonomic scope" value="Bacteria"/>
</dbReference>
<dbReference type="HOGENOM" id="CLU_050675_0_0_6"/>
<dbReference type="Proteomes" id="UP000008840">
    <property type="component" value="Chromosome"/>
</dbReference>
<dbReference type="GO" id="GO:0005829">
    <property type="term" value="C:cytosol"/>
    <property type="evidence" value="ECO:0007669"/>
    <property type="project" value="TreeGrafter"/>
</dbReference>
<dbReference type="GO" id="GO:0004177">
    <property type="term" value="F:aminopeptidase activity"/>
    <property type="evidence" value="ECO:0007669"/>
    <property type="project" value="TreeGrafter"/>
</dbReference>
<dbReference type="GO" id="GO:0046872">
    <property type="term" value="F:metal ion binding"/>
    <property type="evidence" value="ECO:0007669"/>
    <property type="project" value="UniProtKB-KW"/>
</dbReference>
<dbReference type="GO" id="GO:0008235">
    <property type="term" value="F:metalloexopeptidase activity"/>
    <property type="evidence" value="ECO:0007669"/>
    <property type="project" value="UniProtKB-UniRule"/>
</dbReference>
<dbReference type="GO" id="GO:0016795">
    <property type="term" value="F:phosphoric triester hydrolase activity"/>
    <property type="evidence" value="ECO:0007669"/>
    <property type="project" value="InterPro"/>
</dbReference>
<dbReference type="GO" id="GO:0102009">
    <property type="term" value="F:proline dipeptidase activity"/>
    <property type="evidence" value="ECO:0007669"/>
    <property type="project" value="UniProtKB-EC"/>
</dbReference>
<dbReference type="GO" id="GO:0006508">
    <property type="term" value="P:proteolysis"/>
    <property type="evidence" value="ECO:0007669"/>
    <property type="project" value="UniProtKB-KW"/>
</dbReference>
<dbReference type="Gene3D" id="3.90.230.10">
    <property type="entry name" value="Creatinase/methionine aminopeptidase superfamily"/>
    <property type="match status" value="1"/>
</dbReference>
<dbReference type="Gene3D" id="3.40.350.10">
    <property type="entry name" value="Creatinase/prolidase N-terminal domain"/>
    <property type="match status" value="1"/>
</dbReference>
<dbReference type="HAMAP" id="MF_01279">
    <property type="entry name" value="X_Pro_dipeptid"/>
    <property type="match status" value="1"/>
</dbReference>
<dbReference type="InterPro" id="IPR029149">
    <property type="entry name" value="Creatin/AminoP/Spt16_N"/>
</dbReference>
<dbReference type="InterPro" id="IPR036005">
    <property type="entry name" value="Creatinase/aminopeptidase-like"/>
</dbReference>
<dbReference type="InterPro" id="IPR048819">
    <property type="entry name" value="PepQ_N"/>
</dbReference>
<dbReference type="InterPro" id="IPR000994">
    <property type="entry name" value="Pept_M24"/>
</dbReference>
<dbReference type="InterPro" id="IPR001131">
    <property type="entry name" value="Peptidase_M24B_aminopep-P_CS"/>
</dbReference>
<dbReference type="InterPro" id="IPR052433">
    <property type="entry name" value="X-Pro_dipept-like"/>
</dbReference>
<dbReference type="InterPro" id="IPR022846">
    <property type="entry name" value="X_Pro_dipept"/>
</dbReference>
<dbReference type="NCBIfam" id="NF010133">
    <property type="entry name" value="PRK13607.1"/>
    <property type="match status" value="1"/>
</dbReference>
<dbReference type="PANTHER" id="PTHR43226">
    <property type="entry name" value="XAA-PRO AMINOPEPTIDASE 3"/>
    <property type="match status" value="1"/>
</dbReference>
<dbReference type="PANTHER" id="PTHR43226:SF8">
    <property type="entry name" value="XAA-PRO DIPEPTIDASE"/>
    <property type="match status" value="1"/>
</dbReference>
<dbReference type="Pfam" id="PF21216">
    <property type="entry name" value="PepQ_N"/>
    <property type="match status" value="1"/>
</dbReference>
<dbReference type="Pfam" id="PF00557">
    <property type="entry name" value="Peptidase_M24"/>
    <property type="match status" value="1"/>
</dbReference>
<dbReference type="SUPFAM" id="SSF55920">
    <property type="entry name" value="Creatinase/aminopeptidase"/>
    <property type="match status" value="1"/>
</dbReference>
<dbReference type="PROSITE" id="PS00491">
    <property type="entry name" value="PROLINE_PEPTIDASE"/>
    <property type="match status" value="1"/>
</dbReference>
<accession>B2FT23</accession>
<organism>
    <name type="scientific">Stenotrophomonas maltophilia (strain K279a)</name>
    <dbReference type="NCBI Taxonomy" id="522373"/>
    <lineage>
        <taxon>Bacteria</taxon>
        <taxon>Pseudomonadati</taxon>
        <taxon>Pseudomonadota</taxon>
        <taxon>Gammaproteobacteria</taxon>
        <taxon>Lysobacterales</taxon>
        <taxon>Lysobacteraceae</taxon>
        <taxon>Stenotrophomonas</taxon>
        <taxon>Stenotrophomonas maltophilia group</taxon>
    </lineage>
</organism>
<gene>
    <name evidence="1" type="primary">pepQ</name>
    <name type="ordered locus">Smlt3861</name>
</gene>
<comment type="function">
    <text evidence="1">Splits dipeptides with a prolyl residue in the C-terminal position.</text>
</comment>
<comment type="catalytic activity">
    <reaction evidence="1">
        <text>Xaa-L-Pro dipeptide + H2O = an L-alpha-amino acid + L-proline</text>
        <dbReference type="Rhea" id="RHEA:76407"/>
        <dbReference type="ChEBI" id="CHEBI:15377"/>
        <dbReference type="ChEBI" id="CHEBI:59869"/>
        <dbReference type="ChEBI" id="CHEBI:60039"/>
        <dbReference type="ChEBI" id="CHEBI:195196"/>
        <dbReference type="EC" id="3.4.13.9"/>
    </reaction>
</comment>
<comment type="cofactor">
    <cofactor evidence="1">
        <name>Mn(2+)</name>
        <dbReference type="ChEBI" id="CHEBI:29035"/>
    </cofactor>
    <text evidence="1">Binds 2 manganese ions per subunit.</text>
</comment>
<comment type="similarity">
    <text evidence="1">Belongs to the peptidase M24B family. Bacterial-type prolidase subfamily.</text>
</comment>
<keyword id="KW-0224">Dipeptidase</keyword>
<keyword id="KW-0378">Hydrolase</keyword>
<keyword id="KW-0464">Manganese</keyword>
<keyword id="KW-0479">Metal-binding</keyword>
<keyword id="KW-0482">Metalloprotease</keyword>
<keyword id="KW-0645">Protease</keyword>
<keyword id="KW-1185">Reference proteome</keyword>
<name>PEPQ_STRMK</name>
<proteinExistence type="inferred from homology"/>
<reference key="1">
    <citation type="journal article" date="2008" name="Genome Biol.">
        <title>The complete genome, comparative and functional analysis of Stenotrophomonas maltophilia reveals an organism heavily shielded by drug resistance determinants.</title>
        <authorList>
            <person name="Crossman L.C."/>
            <person name="Gould V.C."/>
            <person name="Dow J.M."/>
            <person name="Vernikos G.S."/>
            <person name="Okazaki A."/>
            <person name="Sebaihia M."/>
            <person name="Saunders D."/>
            <person name="Arrowsmith C."/>
            <person name="Carver T."/>
            <person name="Peters N."/>
            <person name="Adlem E."/>
            <person name="Kerhornou A."/>
            <person name="Lord A."/>
            <person name="Murphy L."/>
            <person name="Seeger K."/>
            <person name="Squares R."/>
            <person name="Rutter S."/>
            <person name="Quail M.A."/>
            <person name="Rajandream M.A."/>
            <person name="Harris D."/>
            <person name="Churcher C."/>
            <person name="Bentley S.D."/>
            <person name="Parkhill J."/>
            <person name="Thomson N.R."/>
            <person name="Avison M.B."/>
        </authorList>
    </citation>
    <scope>NUCLEOTIDE SEQUENCE [LARGE SCALE GENOMIC DNA]</scope>
    <source>
        <strain>K279a</strain>
    </source>
</reference>
<sequence>MIQQDPGALYSDHLAVLCRRAEQALARGGFDHLVVPSGTLHYQVFDDRDYPYAVNPQFKAWLPLTRVPNSWIVFTPGKRPAVIFHQPFDYWHVVPDAPSGWWVEHFDIHIIRKPEEALALLPADPSRCAILGEPQSALGNYVPNNPAPVVNYLEWHRGSKTPYEIALMRQAQVLGVRGHRAAEAAFRNGADEFSIHMAYCQAVGQDANELPYGNIVALNEHAAVLHYTELGRKAPQPLRSFLIDAGASAHGYASDITRTYAAQGHDEFAAMIAAVDAAQQQMCAAVRPGFDYKQLHVDAHLSLMGVLKDFGVIKVSPQTALETGVSAAFFPHGIGHLIGLQVHDVAGFAASDEGGRIERPAGHPYLRLTRVLEPGMVVTIEPGLYFIDMLLNEVKDAGHGDAINWERVDFFRPYGGIRIEDEVLCTDGEADNLTRPAFAAANG</sequence>